<keyword id="KW-1003">Cell membrane</keyword>
<keyword id="KW-0285">Flavoprotein</keyword>
<keyword id="KW-0288">FMN</keyword>
<keyword id="KW-0472">Membrane</keyword>
<keyword id="KW-0520">NAD</keyword>
<keyword id="KW-0521">NADP</keyword>
<keyword id="KW-0560">Oxidoreductase</keyword>
<keyword id="KW-1185">Reference proteome</keyword>
<evidence type="ECO:0000269" key="1">
    <source>
    </source>
</evidence>
<evidence type="ECO:0000269" key="2">
    <source>
    </source>
</evidence>
<evidence type="ECO:0000305" key="3"/>
<sequence>MEAVTAIKPLIRVAALSGSLRKTSFHTGLLRAAIDLTKESVPGLQIEYIDISPLPLINTDLEVNGTYPPVVEAFRQKILEADSILFASPEYNFSVSAPLKNALDWASRPPNVWADKPAAIISTGGGFGGGRSQYHLRQIGVFLDLHFINKPEFTLNAFQPPQKFDAEGNLVDEVTKERLKQVLLSLQAFTLRLQGK</sequence>
<reference key="1">
    <citation type="journal article" date="1999" name="FEBS Lett.">
        <title>Cloning and heterologous expression of NAD(P)H:quinone reductase of Arabidopsis thaliana, a functional homologue of animal DT-diaphorase.</title>
        <authorList>
            <person name="Sparla F."/>
            <person name="Tedeschi G."/>
            <person name="Pupillo P."/>
            <person name="Trost P."/>
        </authorList>
    </citation>
    <scope>NUCLEOTIDE SEQUENCE [MRNA]</scope>
    <scope>CATALYTIC ACTIVITY</scope>
    <scope>COFACTOR</scope>
    <scope>SUBUNIT</scope>
</reference>
<reference key="2">
    <citation type="journal article" date="2000" name="DNA Res.">
        <title>Structural analysis of Arabidopsis thaliana chromosome 3. II. Sequence features of the 4,251,695 bp regions covered by 90 P1, TAC and BAC clones.</title>
        <authorList>
            <person name="Kaneko T."/>
            <person name="Katoh T."/>
            <person name="Sato S."/>
            <person name="Nakamura Y."/>
            <person name="Asamizu E."/>
            <person name="Tabata S."/>
        </authorList>
    </citation>
    <scope>NUCLEOTIDE SEQUENCE [LARGE SCALE GENOMIC DNA]</scope>
    <source>
        <strain>cv. Columbia</strain>
    </source>
</reference>
<reference key="3">
    <citation type="journal article" date="2017" name="Plant J.">
        <title>Araport11: a complete reannotation of the Arabidopsis thaliana reference genome.</title>
        <authorList>
            <person name="Cheng C.Y."/>
            <person name="Krishnakumar V."/>
            <person name="Chan A.P."/>
            <person name="Thibaud-Nissen F."/>
            <person name="Schobel S."/>
            <person name="Town C.D."/>
        </authorList>
    </citation>
    <scope>GENOME REANNOTATION</scope>
    <source>
        <strain>cv. Columbia</strain>
    </source>
</reference>
<reference key="4">
    <citation type="journal article" date="2004" name="Mol. Cell. Proteomics">
        <title>Identification of new intrinsic proteins in Arabidopsis plasma membrane proteome.</title>
        <authorList>
            <person name="Marmagne A."/>
            <person name="Rouet M.-A."/>
            <person name="Ferro M."/>
            <person name="Rolland N."/>
            <person name="Alcon C."/>
            <person name="Joyard J."/>
            <person name="Garin J."/>
            <person name="Barbier-Brygoo H."/>
            <person name="Ephritikhine G."/>
        </authorList>
    </citation>
    <scope>IDENTIFICATION BY MASS SPECTROMETRY</scope>
    <scope>SUBCELLULAR LOCATION [LARGE SCALE ANALYSIS]</scope>
</reference>
<feature type="chain" id="PRO_0000160601" description="NADPH:quinone oxidoreductase">
    <location>
        <begin position="1"/>
        <end position="196"/>
    </location>
</feature>
<feature type="sequence conflict" description="In Ref. 1; AAD37373." evidence="3" ref="1">
    <original>R</original>
    <variation>K</variation>
    <location>
        <position position="178"/>
    </location>
</feature>
<accession>Q9LK88</accession>
<accession>Q9XFI5</accession>
<proteinExistence type="evidence at protein level"/>
<dbReference type="EC" id="1.6.5.2"/>
<dbReference type="EMBL" id="AF145234">
    <property type="protein sequence ID" value="AAD37373.1"/>
    <property type="molecule type" value="mRNA"/>
</dbReference>
<dbReference type="EMBL" id="AP000371">
    <property type="protein sequence ID" value="BAB02535.1"/>
    <property type="molecule type" value="Genomic_DNA"/>
</dbReference>
<dbReference type="EMBL" id="CP002686">
    <property type="protein sequence ID" value="AEE77376.1"/>
    <property type="molecule type" value="Genomic_DNA"/>
</dbReference>
<dbReference type="RefSeq" id="NP_189427.1">
    <property type="nucleotide sequence ID" value="NM_113705.4"/>
</dbReference>
<dbReference type="SMR" id="Q9LK88"/>
<dbReference type="FunCoup" id="Q9LK88">
    <property type="interactions" value="214"/>
</dbReference>
<dbReference type="STRING" id="3702.Q9LK88"/>
<dbReference type="iPTMnet" id="Q9LK88"/>
<dbReference type="PaxDb" id="3702-AT3G27890.1"/>
<dbReference type="ProteomicsDB" id="239054"/>
<dbReference type="EnsemblPlants" id="AT3G27890.1">
    <property type="protein sequence ID" value="AT3G27890.1"/>
    <property type="gene ID" value="AT3G27890"/>
</dbReference>
<dbReference type="GeneID" id="822411"/>
<dbReference type="Gramene" id="AT3G27890.1">
    <property type="protein sequence ID" value="AT3G27890.1"/>
    <property type="gene ID" value="AT3G27890"/>
</dbReference>
<dbReference type="KEGG" id="ath:AT3G27890"/>
<dbReference type="Araport" id="AT3G27890"/>
<dbReference type="TAIR" id="AT3G27890">
    <property type="gene designation" value="NQR"/>
</dbReference>
<dbReference type="eggNOG" id="KOG4530">
    <property type="taxonomic scope" value="Eukaryota"/>
</dbReference>
<dbReference type="HOGENOM" id="CLU_055322_4_2_1"/>
<dbReference type="InParanoid" id="Q9LK88"/>
<dbReference type="OMA" id="LECWLAP"/>
<dbReference type="PhylomeDB" id="Q9LK88"/>
<dbReference type="BioCyc" id="ARA:AT3G27890-MONOMER"/>
<dbReference type="BRENDA" id="1.6.5.2">
    <property type="organism ID" value="399"/>
</dbReference>
<dbReference type="BRENDA" id="7.1.1.2">
    <property type="organism ID" value="399"/>
</dbReference>
<dbReference type="PRO" id="PR:Q9LK88"/>
<dbReference type="Proteomes" id="UP000006548">
    <property type="component" value="Chromosome 3"/>
</dbReference>
<dbReference type="ExpressionAtlas" id="Q9LK88">
    <property type="expression patterns" value="baseline and differential"/>
</dbReference>
<dbReference type="GO" id="GO:0009507">
    <property type="term" value="C:chloroplast"/>
    <property type="evidence" value="ECO:0007005"/>
    <property type="project" value="TAIR"/>
</dbReference>
<dbReference type="GO" id="GO:0009570">
    <property type="term" value="C:chloroplast stroma"/>
    <property type="evidence" value="ECO:0007005"/>
    <property type="project" value="TAIR"/>
</dbReference>
<dbReference type="GO" id="GO:0005829">
    <property type="term" value="C:cytosol"/>
    <property type="evidence" value="ECO:0007005"/>
    <property type="project" value="TAIR"/>
</dbReference>
<dbReference type="GO" id="GO:0005886">
    <property type="term" value="C:plasma membrane"/>
    <property type="evidence" value="ECO:0007005"/>
    <property type="project" value="TAIR"/>
</dbReference>
<dbReference type="GO" id="GO:0050136">
    <property type="term" value="F:NADH:ubiquinone reductase (non-electrogenic) activity"/>
    <property type="evidence" value="ECO:0007669"/>
    <property type="project" value="RHEA"/>
</dbReference>
<dbReference type="GO" id="GO:0008753">
    <property type="term" value="F:NADPH dehydrogenase (quinone) activity"/>
    <property type="evidence" value="ECO:0007669"/>
    <property type="project" value="RHEA"/>
</dbReference>
<dbReference type="FunFam" id="3.40.50.360:FF:000031">
    <property type="entry name" value="NADPH:quinone oxidoreductase"/>
    <property type="match status" value="1"/>
</dbReference>
<dbReference type="Gene3D" id="3.40.50.360">
    <property type="match status" value="1"/>
</dbReference>
<dbReference type="InterPro" id="IPR029039">
    <property type="entry name" value="Flavoprotein-like_sf"/>
</dbReference>
<dbReference type="InterPro" id="IPR005025">
    <property type="entry name" value="FMN_Rdtase-like_dom"/>
</dbReference>
<dbReference type="InterPro" id="IPR050712">
    <property type="entry name" value="NAD(P)H-dep_reductase"/>
</dbReference>
<dbReference type="PANTHER" id="PTHR30543">
    <property type="entry name" value="CHROMATE REDUCTASE"/>
    <property type="match status" value="1"/>
</dbReference>
<dbReference type="PANTHER" id="PTHR30543:SF21">
    <property type="entry name" value="NAD(P)H-DEPENDENT FMN REDUCTASE LOT6"/>
    <property type="match status" value="1"/>
</dbReference>
<dbReference type="Pfam" id="PF03358">
    <property type="entry name" value="FMN_red"/>
    <property type="match status" value="1"/>
</dbReference>
<dbReference type="SUPFAM" id="SSF52218">
    <property type="entry name" value="Flavoproteins"/>
    <property type="match status" value="1"/>
</dbReference>
<comment type="function">
    <text>The enzyme apparently serves as a quinone reductase in connection with conjugation reactions of hydroquinones involved in detoxification pathways.</text>
</comment>
<comment type="catalytic activity">
    <reaction evidence="1">
        <text>a quinone + NADH + H(+) = a quinol + NAD(+)</text>
        <dbReference type="Rhea" id="RHEA:46160"/>
        <dbReference type="ChEBI" id="CHEBI:15378"/>
        <dbReference type="ChEBI" id="CHEBI:24646"/>
        <dbReference type="ChEBI" id="CHEBI:57540"/>
        <dbReference type="ChEBI" id="CHEBI:57945"/>
        <dbReference type="ChEBI" id="CHEBI:132124"/>
        <dbReference type="EC" id="1.6.5.2"/>
    </reaction>
</comment>
<comment type="catalytic activity">
    <reaction evidence="1">
        <text>a quinone + NADPH + H(+) = a quinol + NADP(+)</text>
        <dbReference type="Rhea" id="RHEA:46164"/>
        <dbReference type="ChEBI" id="CHEBI:15378"/>
        <dbReference type="ChEBI" id="CHEBI:24646"/>
        <dbReference type="ChEBI" id="CHEBI:57783"/>
        <dbReference type="ChEBI" id="CHEBI:58349"/>
        <dbReference type="ChEBI" id="CHEBI:132124"/>
        <dbReference type="EC" id="1.6.5.2"/>
    </reaction>
</comment>
<comment type="cofactor">
    <cofactor evidence="1">
        <name>FMN</name>
        <dbReference type="ChEBI" id="CHEBI:58210"/>
    </cofactor>
</comment>
<comment type="subunit">
    <text evidence="1">Homotetramer.</text>
</comment>
<comment type="subcellular location">
    <subcellularLocation>
        <location evidence="2">Cell membrane</location>
    </subcellularLocation>
</comment>
<comment type="similarity">
    <text evidence="3">Belongs to the SsuE family.</text>
</comment>
<gene>
    <name type="primary">NQR</name>
    <name type="ordered locus">At3g27890</name>
    <name type="ORF">K16N12.13</name>
</gene>
<organism>
    <name type="scientific">Arabidopsis thaliana</name>
    <name type="common">Mouse-ear cress</name>
    <dbReference type="NCBI Taxonomy" id="3702"/>
    <lineage>
        <taxon>Eukaryota</taxon>
        <taxon>Viridiplantae</taxon>
        <taxon>Streptophyta</taxon>
        <taxon>Embryophyta</taxon>
        <taxon>Tracheophyta</taxon>
        <taxon>Spermatophyta</taxon>
        <taxon>Magnoliopsida</taxon>
        <taxon>eudicotyledons</taxon>
        <taxon>Gunneridae</taxon>
        <taxon>Pentapetalae</taxon>
        <taxon>rosids</taxon>
        <taxon>malvids</taxon>
        <taxon>Brassicales</taxon>
        <taxon>Brassicaceae</taxon>
        <taxon>Camelineae</taxon>
        <taxon>Arabidopsis</taxon>
    </lineage>
</organism>
<protein>
    <recommendedName>
        <fullName>NADPH:quinone oxidoreductase</fullName>
        <ecNumber>1.6.5.2</ecNumber>
    </recommendedName>
</protein>
<name>NQR_ARATH</name>